<name>TPRX2_HUMAN</name>
<gene>
    <name evidence="5 7" type="primary">TPRX2</name>
</gene>
<dbReference type="EMBL" id="AC024582">
    <property type="status" value="NOT_ANNOTATED_CDS"/>
    <property type="molecule type" value="Genomic_DNA"/>
</dbReference>
<dbReference type="EMBL" id="LN901405">
    <property type="status" value="NOT_ANNOTATED_CDS"/>
    <property type="molecule type" value="mRNA"/>
</dbReference>
<dbReference type="CCDS" id="CCDS92655.1"/>
<dbReference type="RefSeq" id="NP_001384276.1">
    <property type="nucleotide sequence ID" value="NM_001397347.2"/>
</dbReference>
<dbReference type="SMR" id="P0DV77"/>
<dbReference type="FunCoup" id="P0DV77">
    <property type="interactions" value="120"/>
</dbReference>
<dbReference type="GlyGen" id="P0DV77">
    <property type="glycosylation" value="1 site"/>
</dbReference>
<dbReference type="Ensembl" id="ENST00000535362.3">
    <property type="protein sequence ID" value="ENSP00000514106.1"/>
    <property type="gene ID" value="ENSG00000259009.5"/>
</dbReference>
<dbReference type="GeneID" id="503627"/>
<dbReference type="MANE-Select" id="ENST00000535362.3">
    <property type="protein sequence ID" value="ENSP00000514106.1"/>
    <property type="RefSeq nucleotide sequence ID" value="NM_001397347.2"/>
    <property type="RefSeq protein sequence ID" value="NP_001384276.1"/>
</dbReference>
<dbReference type="AGR" id="HGNC:32175"/>
<dbReference type="GeneCards" id="TPRX2"/>
<dbReference type="HGNC" id="HGNC:32175">
    <property type="gene designation" value="TPRX2"/>
</dbReference>
<dbReference type="HPA" id="ENSG00000259009">
    <property type="expression patterns" value="Not detected"/>
</dbReference>
<dbReference type="MIM" id="620360">
    <property type="type" value="gene"/>
</dbReference>
<dbReference type="GeneTree" id="ENSGT00940000164595"/>
<dbReference type="Reactome" id="R-HSA-9819196">
    <property type="pathway name" value="Zygotic genome activation (ZGA)"/>
</dbReference>
<dbReference type="PRO" id="PR:P0DV77"/>
<dbReference type="Proteomes" id="UP000005640">
    <property type="component" value="Chromosome 19"/>
</dbReference>
<dbReference type="GO" id="GO:0005654">
    <property type="term" value="C:nucleoplasm"/>
    <property type="evidence" value="ECO:0000304"/>
    <property type="project" value="Reactome"/>
</dbReference>
<dbReference type="GO" id="GO:0005634">
    <property type="term" value="C:nucleus"/>
    <property type="evidence" value="ECO:0000318"/>
    <property type="project" value="GO_Central"/>
</dbReference>
<dbReference type="GO" id="GO:0000981">
    <property type="term" value="F:DNA-binding transcription factor activity, RNA polymerase II-specific"/>
    <property type="evidence" value="ECO:0000314"/>
    <property type="project" value="UniProtKB"/>
</dbReference>
<dbReference type="GO" id="GO:0000978">
    <property type="term" value="F:RNA polymerase II cis-regulatory region sequence-specific DNA binding"/>
    <property type="evidence" value="ECO:0000318"/>
    <property type="project" value="GO_Central"/>
</dbReference>
<dbReference type="GO" id="GO:0160021">
    <property type="term" value="P:maternal-to-zygotic transition of gene expression"/>
    <property type="evidence" value="ECO:0000314"/>
    <property type="project" value="UniProtKB"/>
</dbReference>
<dbReference type="GO" id="GO:0006357">
    <property type="term" value="P:regulation of transcription by RNA polymerase II"/>
    <property type="evidence" value="ECO:0000318"/>
    <property type="project" value="GO_Central"/>
</dbReference>
<dbReference type="CDD" id="cd00086">
    <property type="entry name" value="homeodomain"/>
    <property type="match status" value="1"/>
</dbReference>
<dbReference type="Gene3D" id="1.10.10.60">
    <property type="entry name" value="Homeodomain-like"/>
    <property type="match status" value="1"/>
</dbReference>
<dbReference type="InterPro" id="IPR001356">
    <property type="entry name" value="HD"/>
</dbReference>
<dbReference type="InterPro" id="IPR017970">
    <property type="entry name" value="Homeobox_CS"/>
</dbReference>
<dbReference type="InterPro" id="IPR009057">
    <property type="entry name" value="Homeodomain-like_sf"/>
</dbReference>
<dbReference type="PANTHER" id="PTHR45793">
    <property type="entry name" value="HOMEOBOX PROTEIN"/>
    <property type="match status" value="1"/>
</dbReference>
<dbReference type="PANTHER" id="PTHR45793:SF21">
    <property type="entry name" value="TETRAPEPTIDE REPEAT HOMEOBOX PROTEIN 2"/>
    <property type="match status" value="1"/>
</dbReference>
<dbReference type="Pfam" id="PF00046">
    <property type="entry name" value="Homeodomain"/>
    <property type="match status" value="1"/>
</dbReference>
<dbReference type="SMART" id="SM00389">
    <property type="entry name" value="HOX"/>
    <property type="match status" value="1"/>
</dbReference>
<dbReference type="SUPFAM" id="SSF46689">
    <property type="entry name" value="Homeodomain-like"/>
    <property type="match status" value="1"/>
</dbReference>
<dbReference type="PROSITE" id="PS00027">
    <property type="entry name" value="HOMEOBOX_1"/>
    <property type="match status" value="1"/>
</dbReference>
<dbReference type="PROSITE" id="PS50071">
    <property type="entry name" value="HOMEOBOX_2"/>
    <property type="match status" value="1"/>
</dbReference>
<evidence type="ECO:0000255" key="1">
    <source>
        <dbReference type="PROSITE-ProRule" id="PRU00108"/>
    </source>
</evidence>
<evidence type="ECO:0000256" key="2">
    <source>
        <dbReference type="SAM" id="MobiDB-lite"/>
    </source>
</evidence>
<evidence type="ECO:0000269" key="3">
    <source>
    </source>
</evidence>
<evidence type="ECO:0000269" key="4">
    <source>
    </source>
</evidence>
<evidence type="ECO:0000303" key="5">
    <source>
    </source>
</evidence>
<evidence type="ECO:0000305" key="6"/>
<evidence type="ECO:0000312" key="7">
    <source>
        <dbReference type="HGNC" id="HGNC:32175"/>
    </source>
</evidence>
<reference key="1">
    <citation type="journal article" date="2016" name="Sci. Rep.">
        <title>Characterization and target genes of nine human PRD-like homeobox domain genes expressed exclusively in early embryos.</title>
        <authorList>
            <person name="Madissoon E."/>
            <person name="Jouhilahti E.M."/>
            <person name="Vesterlund L."/>
            <person name="Toehoenen V."/>
            <person name="Krjutskov K."/>
            <person name="Petropoulos S."/>
            <person name="Einarsdottir E."/>
            <person name="Linnarsson S."/>
            <person name="Lanner F."/>
            <person name="Maansson R."/>
            <person name="Hovatta O."/>
            <person name="Buerglin T.R."/>
            <person name="Katayama S."/>
            <person name="Kere J."/>
        </authorList>
    </citation>
    <scope>NUCLEOTIDE SEQUENCE [MRNA]</scope>
    <scope>FUNCTION</scope>
    <scope>DEVELOPMENTAL STAGE</scope>
</reference>
<reference key="2">
    <citation type="journal article" date="2004" name="Nature">
        <title>The DNA sequence and biology of human chromosome 19.</title>
        <authorList>
            <person name="Grimwood J."/>
            <person name="Gordon L.A."/>
            <person name="Olsen A.S."/>
            <person name="Terry A."/>
            <person name="Schmutz J."/>
            <person name="Lamerdin J.E."/>
            <person name="Hellsten U."/>
            <person name="Goodstein D."/>
            <person name="Couronne O."/>
            <person name="Tran-Gyamfi M."/>
            <person name="Aerts A."/>
            <person name="Altherr M."/>
            <person name="Ashworth L."/>
            <person name="Bajorek E."/>
            <person name="Black S."/>
            <person name="Branscomb E."/>
            <person name="Caenepeel S."/>
            <person name="Carrano A.V."/>
            <person name="Caoile C."/>
            <person name="Chan Y.M."/>
            <person name="Christensen M."/>
            <person name="Cleland C.A."/>
            <person name="Copeland A."/>
            <person name="Dalin E."/>
            <person name="Dehal P."/>
            <person name="Denys M."/>
            <person name="Detter J.C."/>
            <person name="Escobar J."/>
            <person name="Flowers D."/>
            <person name="Fotopulos D."/>
            <person name="Garcia C."/>
            <person name="Georgescu A.M."/>
            <person name="Glavina T."/>
            <person name="Gomez M."/>
            <person name="Gonzales E."/>
            <person name="Groza M."/>
            <person name="Hammon N."/>
            <person name="Hawkins T."/>
            <person name="Haydu L."/>
            <person name="Ho I."/>
            <person name="Huang W."/>
            <person name="Israni S."/>
            <person name="Jett J."/>
            <person name="Kadner K."/>
            <person name="Kimball H."/>
            <person name="Kobayashi A."/>
            <person name="Larionov V."/>
            <person name="Leem S.-H."/>
            <person name="Lopez F."/>
            <person name="Lou Y."/>
            <person name="Lowry S."/>
            <person name="Malfatti S."/>
            <person name="Martinez D."/>
            <person name="McCready P.M."/>
            <person name="Medina C."/>
            <person name="Morgan J."/>
            <person name="Nelson K."/>
            <person name="Nolan M."/>
            <person name="Ovcharenko I."/>
            <person name="Pitluck S."/>
            <person name="Pollard M."/>
            <person name="Popkie A.P."/>
            <person name="Predki P."/>
            <person name="Quan G."/>
            <person name="Ramirez L."/>
            <person name="Rash S."/>
            <person name="Retterer J."/>
            <person name="Rodriguez A."/>
            <person name="Rogers S."/>
            <person name="Salamov A."/>
            <person name="Salazar A."/>
            <person name="She X."/>
            <person name="Smith D."/>
            <person name="Slezak T."/>
            <person name="Solovyev V."/>
            <person name="Thayer N."/>
            <person name="Tice H."/>
            <person name="Tsai M."/>
            <person name="Ustaszewska A."/>
            <person name="Vo N."/>
            <person name="Wagner M."/>
            <person name="Wheeler J."/>
            <person name="Wu K."/>
            <person name="Xie G."/>
            <person name="Yang J."/>
            <person name="Dubchak I."/>
            <person name="Furey T.S."/>
            <person name="DeJong P."/>
            <person name="Dickson M."/>
            <person name="Gordon D."/>
            <person name="Eichler E.E."/>
            <person name="Pennacchio L.A."/>
            <person name="Richardson P."/>
            <person name="Stubbs L."/>
            <person name="Rokhsar D.S."/>
            <person name="Myers R.M."/>
            <person name="Rubin E.M."/>
            <person name="Lucas S.M."/>
        </authorList>
    </citation>
    <scope>NUCLEOTIDE SEQUENCE [LARGE SCALE GENOMIC DNA]</scope>
</reference>
<reference key="3">
    <citation type="journal article" date="2022" name="Science">
        <title>Translatome and transcriptome co-profiling reveals a role of TPRXs in human zygotic genome activation.</title>
        <authorList>
            <person name="Zou Z."/>
            <person name="Zhang C."/>
            <person name="Wang Q."/>
            <person name="Hou Z."/>
            <person name="Xiong Z."/>
            <person name="Kong F."/>
            <person name="Wang Q."/>
            <person name="Song J."/>
            <person name="Liu B."/>
            <person name="Liu B."/>
            <person name="Wang L."/>
            <person name="Lai F."/>
            <person name="Fan Q."/>
            <person name="Tao W."/>
            <person name="Zhao S."/>
            <person name="Ma X."/>
            <person name="Li M."/>
            <person name="Wu K."/>
            <person name="Zhao H."/>
            <person name="Chen Z.J."/>
            <person name="Xie W."/>
        </authorList>
    </citation>
    <scope>FUNCTION</scope>
    <scope>DEVELOPMENTAL STAGE</scope>
</reference>
<feature type="chain" id="PRO_0000455535" description="Tetrapeptide repeat homeobox protein 2">
    <location>
        <begin position="1"/>
        <end position="301"/>
    </location>
</feature>
<feature type="DNA-binding region" description="Homeobox" evidence="1">
    <location>
        <begin position="20"/>
        <end position="79"/>
    </location>
</feature>
<feature type="region of interest" description="Disordered" evidence="2">
    <location>
        <begin position="1"/>
        <end position="27"/>
    </location>
</feature>
<feature type="region of interest" description="Disordered" evidence="2">
    <location>
        <begin position="273"/>
        <end position="301"/>
    </location>
</feature>
<feature type="compositionally biased region" description="Basic and acidic residues" evidence="2">
    <location>
        <begin position="16"/>
        <end position="26"/>
    </location>
</feature>
<feature type="compositionally biased region" description="Basic and acidic residues" evidence="2">
    <location>
        <begin position="281"/>
        <end position="292"/>
    </location>
</feature>
<feature type="sequence conflict" description="In Ref. 1; LN901405." evidence="6" ref="1">
    <original>P</original>
    <variation>T</variation>
    <location>
        <position position="16"/>
    </location>
</feature>
<feature type="sequence conflict" description="In Ref. 1; LN901405." evidence="6" ref="1">
    <original>Q</original>
    <variation>R</variation>
    <location>
        <position position="31"/>
    </location>
</feature>
<keyword id="KW-0217">Developmental protein</keyword>
<keyword id="KW-0238">DNA-binding</keyword>
<keyword id="KW-0371">Homeobox</keyword>
<keyword id="KW-0539">Nucleus</keyword>
<keyword id="KW-1185">Reference proteome</keyword>
<keyword id="KW-0678">Repressor</keyword>
<keyword id="KW-0804">Transcription</keyword>
<keyword id="KW-0805">Transcription regulation</keyword>
<organism>
    <name type="scientific">Homo sapiens</name>
    <name type="common">Human</name>
    <dbReference type="NCBI Taxonomy" id="9606"/>
    <lineage>
        <taxon>Eukaryota</taxon>
        <taxon>Metazoa</taxon>
        <taxon>Chordata</taxon>
        <taxon>Craniata</taxon>
        <taxon>Vertebrata</taxon>
        <taxon>Euteleostomi</taxon>
        <taxon>Mammalia</taxon>
        <taxon>Eutheria</taxon>
        <taxon>Euarchontoglires</taxon>
        <taxon>Primates</taxon>
        <taxon>Haplorrhini</taxon>
        <taxon>Catarrhini</taxon>
        <taxon>Hominidae</taxon>
        <taxon>Homo</taxon>
    </lineage>
</organism>
<protein>
    <recommendedName>
        <fullName evidence="6">Tetrapeptide repeat homeobox protein 2</fullName>
    </recommendedName>
</protein>
<accession>P0DV77</accession>
<sequence>MQDPGHLQGPPLALDPPRRQRQERTVYTESQQKVLEFYFQKDQYPNYDQRLNLAEMLSLREQQLQVWFKNRRAKLARERRLQQQPQRVPGQRGRGARAAPLVPVAAASFPGGPEFPQGRGSWISPQPGPWGVLPAAEPKIYSLPRTWGGPECGTQEGLKAVPAPGPGPIPAPIPGPAQIPGPVPGPAPNLGPMSGPLSVSIPGPIPAPISCPGPIPDPVLGRTLMPGPGSLPTPAPGALWPQSPYASNLSPDTQLYPDFTKLLPLLDRFEESSLSTTTSQYKEEDGFVDKNHSVPRSLLDL</sequence>
<comment type="function">
    <text evidence="3 4">Transcription factor expressed after fertilization required for zygotic genome activation (ZGA), a critical event in early embryonic development during which the developmental control passes from maternally provided mRNAs to the expression of the zygotic genome after fertilization (PubMed:27412763, PubMed:36074823). Binds and activates expression of key ZGA marker genes, such as NANOGNB, ZSCAN4, DUXB, KLF5 and DPPA3 (PubMed:36074823). Binds to regulatory DNA sequences containing a 5'-TAATCC-3' sequence motif (PubMed:36074823).</text>
</comment>
<comment type="subcellular location">
    <subcellularLocation>
        <location evidence="1">Nucleus</location>
    </subcellularLocation>
</comment>
<comment type="developmental stage">
    <text evidence="3 4">Expressed in single blastomeres (PubMed:27412763). Expression starts to increase at the 4-cell (4C) stage and culminates at the 8-cell (8C) stage (PubMed:36074823).</text>
</comment>
<comment type="similarity">
    <text evidence="6">Belongs to the paired homeobox family.</text>
</comment>
<comment type="online information" name="Protein Spotlight">
    <link uri="https://www.proteinspotlight.org/back_issues/256/"/>
    <text>In the beginning - Issue 256 of March 2023</text>
</comment>
<proteinExistence type="evidence at transcript level"/>